<evidence type="ECO:0000250" key="1"/>
<evidence type="ECO:0000255" key="2">
    <source>
        <dbReference type="PROSITE-ProRule" id="PRU00182"/>
    </source>
</evidence>
<evidence type="ECO:0000305" key="3"/>
<proteinExistence type="inferred from homology"/>
<feature type="chain" id="PRO_0000100022" description="Uncharacterized RNA pseudouridine synthase aq_554">
    <location>
        <begin position="1"/>
        <end position="238"/>
    </location>
</feature>
<feature type="domain" description="S4 RNA-binding" evidence="2">
    <location>
        <begin position="1"/>
        <end position="64"/>
    </location>
</feature>
<feature type="active site" description="Nucleophile" evidence="1">
    <location>
        <position position="103"/>
    </location>
</feature>
<sequence>MRLDKYLSKSLHISRKEAKELIREGRVKVSGKVVKQAEYRVKEGEEVEVEGKSVKPKKNVYLMLYKPKGYLSTTEEDKKYPSFLELIREHFPSRKLFSAGRLDVDAEGLLLITDDGELAHRLTHPKWKVEKEYIVRLDRDIGDEELKKLYEVKLEEKPVQLVKAEKLSGDTVKAILTEGRHHVVKRLFKAVGHNVVYLKRTRVGNLRLDENMEPGEWRELTEEEVKELKRLVKYNPQN</sequence>
<dbReference type="EC" id="5.4.99.-"/>
<dbReference type="EMBL" id="AE000657">
    <property type="protein sequence ID" value="AAC06794.1"/>
    <property type="molecule type" value="Genomic_DNA"/>
</dbReference>
<dbReference type="PIR" id="A70350">
    <property type="entry name" value="A70350"/>
</dbReference>
<dbReference type="RefSeq" id="NP_213389.1">
    <property type="nucleotide sequence ID" value="NC_000918.1"/>
</dbReference>
<dbReference type="RefSeq" id="WP_010880327.1">
    <property type="nucleotide sequence ID" value="NC_000918.1"/>
</dbReference>
<dbReference type="SMR" id="O66829"/>
<dbReference type="FunCoup" id="O66829">
    <property type="interactions" value="294"/>
</dbReference>
<dbReference type="STRING" id="224324.aq_554"/>
<dbReference type="EnsemblBacteria" id="AAC06794">
    <property type="protein sequence ID" value="AAC06794"/>
    <property type="gene ID" value="aq_554"/>
</dbReference>
<dbReference type="KEGG" id="aae:aq_554"/>
<dbReference type="PATRIC" id="fig|224324.8.peg.455"/>
<dbReference type="eggNOG" id="COG1187">
    <property type="taxonomic scope" value="Bacteria"/>
</dbReference>
<dbReference type="HOGENOM" id="CLU_024979_1_2_0"/>
<dbReference type="InParanoid" id="O66829"/>
<dbReference type="OrthoDB" id="9807213at2"/>
<dbReference type="Proteomes" id="UP000000798">
    <property type="component" value="Chromosome"/>
</dbReference>
<dbReference type="GO" id="GO:0003723">
    <property type="term" value="F:RNA binding"/>
    <property type="evidence" value="ECO:0007669"/>
    <property type="project" value="UniProtKB-KW"/>
</dbReference>
<dbReference type="GO" id="GO:0120159">
    <property type="term" value="F:rRNA pseudouridine synthase activity"/>
    <property type="evidence" value="ECO:0007669"/>
    <property type="project" value="UniProtKB-ARBA"/>
</dbReference>
<dbReference type="GO" id="GO:0000455">
    <property type="term" value="P:enzyme-directed rRNA pseudouridine synthesis"/>
    <property type="evidence" value="ECO:0007669"/>
    <property type="project" value="UniProtKB-ARBA"/>
</dbReference>
<dbReference type="CDD" id="cd00165">
    <property type="entry name" value="S4"/>
    <property type="match status" value="1"/>
</dbReference>
<dbReference type="FunFam" id="3.10.290.10:FF:000003">
    <property type="entry name" value="Pseudouridine synthase"/>
    <property type="match status" value="1"/>
</dbReference>
<dbReference type="Gene3D" id="3.30.70.1560">
    <property type="entry name" value="Alpha-L RNA-binding motif"/>
    <property type="match status" value="1"/>
</dbReference>
<dbReference type="Gene3D" id="3.30.70.580">
    <property type="entry name" value="Pseudouridine synthase I, catalytic domain, N-terminal subdomain"/>
    <property type="match status" value="1"/>
</dbReference>
<dbReference type="Gene3D" id="3.10.290.10">
    <property type="entry name" value="RNA-binding S4 domain"/>
    <property type="match status" value="1"/>
</dbReference>
<dbReference type="InterPro" id="IPR042092">
    <property type="entry name" value="PsdUridine_s_RsuA/RluB/E/F_cat"/>
</dbReference>
<dbReference type="InterPro" id="IPR020103">
    <property type="entry name" value="PsdUridine_synth_cat_dom_sf"/>
</dbReference>
<dbReference type="InterPro" id="IPR006145">
    <property type="entry name" value="PsdUridine_synth_RsuA/RluA"/>
</dbReference>
<dbReference type="InterPro" id="IPR000748">
    <property type="entry name" value="PsdUridine_synth_RsuA/RluB/E/F"/>
</dbReference>
<dbReference type="InterPro" id="IPR018496">
    <property type="entry name" value="PsdUridine_synth_RsuA/RluB_CS"/>
</dbReference>
<dbReference type="InterPro" id="IPR050343">
    <property type="entry name" value="RsuA_PseudoU_synthase"/>
</dbReference>
<dbReference type="InterPro" id="IPR002942">
    <property type="entry name" value="S4_RNA-bd"/>
</dbReference>
<dbReference type="InterPro" id="IPR036986">
    <property type="entry name" value="S4_RNA-bd_sf"/>
</dbReference>
<dbReference type="InterPro" id="IPR020094">
    <property type="entry name" value="TruA/RsuA/RluB/E/F_N"/>
</dbReference>
<dbReference type="NCBIfam" id="TIGR00093">
    <property type="entry name" value="pseudouridine synthase"/>
    <property type="match status" value="1"/>
</dbReference>
<dbReference type="PANTHER" id="PTHR47683:SF4">
    <property type="entry name" value="PSEUDOURIDINE SYNTHASE"/>
    <property type="match status" value="1"/>
</dbReference>
<dbReference type="PANTHER" id="PTHR47683">
    <property type="entry name" value="PSEUDOURIDINE SYNTHASE FAMILY PROTEIN-RELATED"/>
    <property type="match status" value="1"/>
</dbReference>
<dbReference type="Pfam" id="PF00849">
    <property type="entry name" value="PseudoU_synth_2"/>
    <property type="match status" value="1"/>
</dbReference>
<dbReference type="Pfam" id="PF01479">
    <property type="entry name" value="S4"/>
    <property type="match status" value="1"/>
</dbReference>
<dbReference type="SMART" id="SM00363">
    <property type="entry name" value="S4"/>
    <property type="match status" value="1"/>
</dbReference>
<dbReference type="SUPFAM" id="SSF55174">
    <property type="entry name" value="Alpha-L RNA-binding motif"/>
    <property type="match status" value="1"/>
</dbReference>
<dbReference type="SUPFAM" id="SSF55120">
    <property type="entry name" value="Pseudouridine synthase"/>
    <property type="match status" value="1"/>
</dbReference>
<dbReference type="PROSITE" id="PS01149">
    <property type="entry name" value="PSI_RSU"/>
    <property type="match status" value="1"/>
</dbReference>
<dbReference type="PROSITE" id="PS50889">
    <property type="entry name" value="S4"/>
    <property type="match status" value="1"/>
</dbReference>
<gene>
    <name type="ordered locus">aq_554</name>
</gene>
<protein>
    <recommendedName>
        <fullName>Uncharacterized RNA pseudouridine synthase aq_554</fullName>
        <ecNumber>5.4.99.-</ecNumber>
    </recommendedName>
    <alternativeName>
        <fullName>RNA pseudouridylate synthase</fullName>
    </alternativeName>
    <alternativeName>
        <fullName>RNA-uridine isomerase</fullName>
    </alternativeName>
</protein>
<keyword id="KW-0413">Isomerase</keyword>
<keyword id="KW-1185">Reference proteome</keyword>
<keyword id="KW-0694">RNA-binding</keyword>
<reference key="1">
    <citation type="journal article" date="1998" name="Nature">
        <title>The complete genome of the hyperthermophilic bacterium Aquifex aeolicus.</title>
        <authorList>
            <person name="Deckert G."/>
            <person name="Warren P.V."/>
            <person name="Gaasterland T."/>
            <person name="Young W.G."/>
            <person name="Lenox A.L."/>
            <person name="Graham D.E."/>
            <person name="Overbeek R."/>
            <person name="Snead M.A."/>
            <person name="Keller M."/>
            <person name="Aujay M."/>
            <person name="Huber R."/>
            <person name="Feldman R.A."/>
            <person name="Short J.M."/>
            <person name="Olsen G.J."/>
            <person name="Swanson R.V."/>
        </authorList>
    </citation>
    <scope>NUCLEOTIDE SEQUENCE [LARGE SCALE GENOMIC DNA]</scope>
    <source>
        <strain>VF5</strain>
    </source>
</reference>
<accession>O66829</accession>
<name>Y554_AQUAE</name>
<organism>
    <name type="scientific">Aquifex aeolicus (strain VF5)</name>
    <dbReference type="NCBI Taxonomy" id="224324"/>
    <lineage>
        <taxon>Bacteria</taxon>
        <taxon>Pseudomonadati</taxon>
        <taxon>Aquificota</taxon>
        <taxon>Aquificia</taxon>
        <taxon>Aquificales</taxon>
        <taxon>Aquificaceae</taxon>
        <taxon>Aquifex</taxon>
    </lineage>
</organism>
<comment type="catalytic activity">
    <reaction>
        <text>a uridine in RNA = a pseudouridine in RNA</text>
        <dbReference type="Rhea" id="RHEA:48348"/>
        <dbReference type="Rhea" id="RHEA-COMP:12068"/>
        <dbReference type="Rhea" id="RHEA-COMP:12069"/>
        <dbReference type="ChEBI" id="CHEBI:65314"/>
        <dbReference type="ChEBI" id="CHEBI:65315"/>
    </reaction>
</comment>
<comment type="similarity">
    <text evidence="3">Belongs to the pseudouridine synthase RsuA family.</text>
</comment>